<accession>Q3AP59</accession>
<comment type="catalytic activity">
    <reaction evidence="1">
        <text>(S)-4-amino-5-oxopentanoate = 5-aminolevulinate</text>
        <dbReference type="Rhea" id="RHEA:14265"/>
        <dbReference type="ChEBI" id="CHEBI:57501"/>
        <dbReference type="ChEBI" id="CHEBI:356416"/>
        <dbReference type="EC" id="5.4.3.8"/>
    </reaction>
</comment>
<comment type="cofactor">
    <cofactor evidence="1">
        <name>pyridoxal 5'-phosphate</name>
        <dbReference type="ChEBI" id="CHEBI:597326"/>
    </cofactor>
</comment>
<comment type="pathway">
    <text evidence="1">Porphyrin-containing compound metabolism; protoporphyrin-IX biosynthesis; 5-aminolevulinate from L-glutamyl-tRNA(Glu): step 2/2.</text>
</comment>
<comment type="pathway">
    <text evidence="1">Porphyrin-containing compound metabolism; chlorophyll biosynthesis.</text>
</comment>
<comment type="subunit">
    <text evidence="1">Homodimer.</text>
</comment>
<comment type="subcellular location">
    <subcellularLocation>
        <location evidence="1">Cytoplasm</location>
    </subcellularLocation>
</comment>
<comment type="similarity">
    <text evidence="1">Belongs to the class-III pyridoxal-phosphate-dependent aminotransferase family. HemL subfamily.</text>
</comment>
<proteinExistence type="inferred from homology"/>
<name>GSA_CHLCH</name>
<protein>
    <recommendedName>
        <fullName evidence="1">Glutamate-1-semialdehyde 2,1-aminomutase</fullName>
        <shortName evidence="1">GSA</shortName>
        <ecNumber evidence="1">5.4.3.8</ecNumber>
    </recommendedName>
    <alternativeName>
        <fullName evidence="1">Glutamate-1-semialdehyde aminotransferase</fullName>
        <shortName evidence="1">GSA-AT</shortName>
    </alternativeName>
</protein>
<sequence>MPQITRSIELFEKAKKFIPGGVNSPVRAFKSVGGTPIYMAKGSGAYMTDVDGNTYLDYVGSWGPFILGSMHPRITAALEYTLKNIGTSFGTPIEMEIEIAELLCQIVPSLEMVRMVNSGTEATMSAVRLARGYTGRDKIIKFEGCYHGHGDSFLIKAGSGALTLGAPDSPGVTKGTAQDTLNATYNDIESVKLLVQENKGNVAAIIIEPVAGNTGVIPAQPGFLAALRQLCDEEGIVLIFDEVMCGFRVALGGAQSLYGVTPDLTTMGKIIGGGLPVGAFGGKRKLMERVAPLGDVYQAGTLSGNPLALTAGLETLKILMDENPYPELERKAVILEEGFKANLAKLGLNYVQNRVGSMSCLFFTETPVVNYTTAITADTKKHAKYFHSLLDQGIYTAPSQFEAMFISSVMTDEDLDKTIKANYNALVASQQ</sequence>
<gene>
    <name evidence="1" type="primary">hemL</name>
    <name type="ordered locus">Cag_1968</name>
</gene>
<keyword id="KW-0149">Chlorophyll biosynthesis</keyword>
<keyword id="KW-0963">Cytoplasm</keyword>
<keyword id="KW-0413">Isomerase</keyword>
<keyword id="KW-0627">Porphyrin biosynthesis</keyword>
<keyword id="KW-0663">Pyridoxal phosphate</keyword>
<evidence type="ECO:0000255" key="1">
    <source>
        <dbReference type="HAMAP-Rule" id="MF_00375"/>
    </source>
</evidence>
<dbReference type="EC" id="5.4.3.8" evidence="1"/>
<dbReference type="EMBL" id="CP000108">
    <property type="protein sequence ID" value="ABB29216.1"/>
    <property type="molecule type" value="Genomic_DNA"/>
</dbReference>
<dbReference type="SMR" id="Q3AP59"/>
<dbReference type="STRING" id="340177.Cag_1968"/>
<dbReference type="KEGG" id="cch:Cag_1968"/>
<dbReference type="eggNOG" id="COG0001">
    <property type="taxonomic scope" value="Bacteria"/>
</dbReference>
<dbReference type="HOGENOM" id="CLU_016922_1_5_10"/>
<dbReference type="OrthoDB" id="9807885at2"/>
<dbReference type="UniPathway" id="UPA00251">
    <property type="reaction ID" value="UER00317"/>
</dbReference>
<dbReference type="UniPathway" id="UPA00668"/>
<dbReference type="GO" id="GO:0005737">
    <property type="term" value="C:cytoplasm"/>
    <property type="evidence" value="ECO:0007669"/>
    <property type="project" value="UniProtKB-SubCell"/>
</dbReference>
<dbReference type="GO" id="GO:0042286">
    <property type="term" value="F:glutamate-1-semialdehyde 2,1-aminomutase activity"/>
    <property type="evidence" value="ECO:0007669"/>
    <property type="project" value="UniProtKB-UniRule"/>
</dbReference>
<dbReference type="GO" id="GO:0030170">
    <property type="term" value="F:pyridoxal phosphate binding"/>
    <property type="evidence" value="ECO:0007669"/>
    <property type="project" value="InterPro"/>
</dbReference>
<dbReference type="GO" id="GO:0008483">
    <property type="term" value="F:transaminase activity"/>
    <property type="evidence" value="ECO:0007669"/>
    <property type="project" value="InterPro"/>
</dbReference>
<dbReference type="GO" id="GO:0015995">
    <property type="term" value="P:chlorophyll biosynthetic process"/>
    <property type="evidence" value="ECO:0007669"/>
    <property type="project" value="UniProtKB-UniPathway"/>
</dbReference>
<dbReference type="GO" id="GO:0006782">
    <property type="term" value="P:protoporphyrinogen IX biosynthetic process"/>
    <property type="evidence" value="ECO:0007669"/>
    <property type="project" value="UniProtKB-UniRule"/>
</dbReference>
<dbReference type="CDD" id="cd00610">
    <property type="entry name" value="OAT_like"/>
    <property type="match status" value="1"/>
</dbReference>
<dbReference type="FunFam" id="3.40.640.10:FF:000021">
    <property type="entry name" value="Glutamate-1-semialdehyde 2,1-aminomutase"/>
    <property type="match status" value="1"/>
</dbReference>
<dbReference type="Gene3D" id="3.90.1150.10">
    <property type="entry name" value="Aspartate Aminotransferase, domain 1"/>
    <property type="match status" value="1"/>
</dbReference>
<dbReference type="Gene3D" id="3.40.640.10">
    <property type="entry name" value="Type I PLP-dependent aspartate aminotransferase-like (Major domain)"/>
    <property type="match status" value="1"/>
</dbReference>
<dbReference type="HAMAP" id="MF_00375">
    <property type="entry name" value="HemL_aminotrans_3"/>
    <property type="match status" value="1"/>
</dbReference>
<dbReference type="InterPro" id="IPR004639">
    <property type="entry name" value="4pyrrol_synth_GluAld_NH2Trfase"/>
</dbReference>
<dbReference type="InterPro" id="IPR005814">
    <property type="entry name" value="Aminotrans_3"/>
</dbReference>
<dbReference type="InterPro" id="IPR049704">
    <property type="entry name" value="Aminotrans_3_PPA_site"/>
</dbReference>
<dbReference type="InterPro" id="IPR015424">
    <property type="entry name" value="PyrdxlP-dep_Trfase"/>
</dbReference>
<dbReference type="InterPro" id="IPR015421">
    <property type="entry name" value="PyrdxlP-dep_Trfase_major"/>
</dbReference>
<dbReference type="InterPro" id="IPR015422">
    <property type="entry name" value="PyrdxlP-dep_Trfase_small"/>
</dbReference>
<dbReference type="NCBIfam" id="TIGR00713">
    <property type="entry name" value="hemL"/>
    <property type="match status" value="1"/>
</dbReference>
<dbReference type="NCBIfam" id="NF000818">
    <property type="entry name" value="PRK00062.1"/>
    <property type="match status" value="1"/>
</dbReference>
<dbReference type="PANTHER" id="PTHR43713">
    <property type="entry name" value="GLUTAMATE-1-SEMIALDEHYDE 2,1-AMINOMUTASE"/>
    <property type="match status" value="1"/>
</dbReference>
<dbReference type="PANTHER" id="PTHR43713:SF3">
    <property type="entry name" value="GLUTAMATE-1-SEMIALDEHYDE 2,1-AMINOMUTASE 1, CHLOROPLASTIC-RELATED"/>
    <property type="match status" value="1"/>
</dbReference>
<dbReference type="Pfam" id="PF00202">
    <property type="entry name" value="Aminotran_3"/>
    <property type="match status" value="1"/>
</dbReference>
<dbReference type="SUPFAM" id="SSF53383">
    <property type="entry name" value="PLP-dependent transferases"/>
    <property type="match status" value="1"/>
</dbReference>
<dbReference type="PROSITE" id="PS00600">
    <property type="entry name" value="AA_TRANSFER_CLASS_3"/>
    <property type="match status" value="1"/>
</dbReference>
<reference key="1">
    <citation type="submission" date="2005-08" db="EMBL/GenBank/DDBJ databases">
        <title>Complete sequence of Chlorobium chlorochromatii CaD3.</title>
        <authorList>
            <consortium name="US DOE Joint Genome Institute"/>
            <person name="Copeland A."/>
            <person name="Lucas S."/>
            <person name="Lapidus A."/>
            <person name="Barry K."/>
            <person name="Detter J.C."/>
            <person name="Glavina T."/>
            <person name="Hammon N."/>
            <person name="Israni S."/>
            <person name="Pitluck S."/>
            <person name="Bryant D."/>
            <person name="Schmutz J."/>
            <person name="Larimer F."/>
            <person name="Land M."/>
            <person name="Kyrpides N."/>
            <person name="Ivanova N."/>
            <person name="Richardson P."/>
        </authorList>
    </citation>
    <scope>NUCLEOTIDE SEQUENCE [LARGE SCALE GENOMIC DNA]</scope>
    <source>
        <strain>CaD3</strain>
    </source>
</reference>
<feature type="chain" id="PRO_0000243561" description="Glutamate-1-semialdehyde 2,1-aminomutase">
    <location>
        <begin position="1"/>
        <end position="431"/>
    </location>
</feature>
<feature type="modified residue" description="N6-(pyridoxal phosphate)lysine" evidence="1">
    <location>
        <position position="269"/>
    </location>
</feature>
<organism>
    <name type="scientific">Chlorobium chlorochromatii (strain CaD3)</name>
    <dbReference type="NCBI Taxonomy" id="340177"/>
    <lineage>
        <taxon>Bacteria</taxon>
        <taxon>Pseudomonadati</taxon>
        <taxon>Chlorobiota</taxon>
        <taxon>Chlorobiia</taxon>
        <taxon>Chlorobiales</taxon>
        <taxon>Chlorobiaceae</taxon>
        <taxon>Chlorobium/Pelodictyon group</taxon>
        <taxon>Chlorobium</taxon>
    </lineage>
</organism>